<evidence type="ECO:0000255" key="1">
    <source>
        <dbReference type="HAMAP-Rule" id="MF_00972"/>
    </source>
</evidence>
<evidence type="ECO:0000255" key="2">
    <source>
        <dbReference type="PROSITE-ProRule" id="PRU01083"/>
    </source>
</evidence>
<evidence type="ECO:0000305" key="3"/>
<proteinExistence type="inferred from homology"/>
<comment type="function">
    <text evidence="1">Catalyzes the deamination of adenosine to inosine at the wobble position 34 of tRNA(Arg2).</text>
</comment>
<comment type="catalytic activity">
    <reaction evidence="1">
        <text>adenosine(34) in tRNA + H2O + H(+) = inosine(34) in tRNA + NH4(+)</text>
        <dbReference type="Rhea" id="RHEA:43168"/>
        <dbReference type="Rhea" id="RHEA-COMP:10373"/>
        <dbReference type="Rhea" id="RHEA-COMP:10374"/>
        <dbReference type="ChEBI" id="CHEBI:15377"/>
        <dbReference type="ChEBI" id="CHEBI:15378"/>
        <dbReference type="ChEBI" id="CHEBI:28938"/>
        <dbReference type="ChEBI" id="CHEBI:74411"/>
        <dbReference type="ChEBI" id="CHEBI:82852"/>
        <dbReference type="EC" id="3.5.4.33"/>
    </reaction>
</comment>
<comment type="cofactor">
    <cofactor evidence="1">
        <name>Zn(2+)</name>
        <dbReference type="ChEBI" id="CHEBI:29105"/>
    </cofactor>
    <text evidence="1">Binds 1 zinc ion per subunit.</text>
</comment>
<comment type="subunit">
    <text evidence="1">Homodimer.</text>
</comment>
<comment type="similarity">
    <text evidence="1">Belongs to the cytidine and deoxycytidylate deaminase family.</text>
</comment>
<comment type="sequence caution" evidence="3">
    <conflict type="erroneous initiation">
        <sequence resource="EMBL-CDS" id="AAL21462"/>
    </conflict>
    <text>Extended N-terminus.</text>
</comment>
<accession>Q7CQ08</accession>
<feature type="chain" id="PRO_0000171737" description="tRNA-specific adenosine deaminase">
    <location>
        <begin position="1"/>
        <end position="172"/>
    </location>
</feature>
<feature type="domain" description="CMP/dCMP-type deaminase" evidence="2">
    <location>
        <begin position="6"/>
        <end position="117"/>
    </location>
</feature>
<feature type="active site" description="Proton donor" evidence="1">
    <location>
        <position position="59"/>
    </location>
</feature>
<feature type="binding site" evidence="1">
    <location>
        <position position="57"/>
    </location>
    <ligand>
        <name>Zn(2+)</name>
        <dbReference type="ChEBI" id="CHEBI:29105"/>
        <note>catalytic</note>
    </ligand>
</feature>
<feature type="binding site" evidence="1">
    <location>
        <position position="87"/>
    </location>
    <ligand>
        <name>Zn(2+)</name>
        <dbReference type="ChEBI" id="CHEBI:29105"/>
        <note>catalytic</note>
    </ligand>
</feature>
<feature type="binding site" evidence="1">
    <location>
        <position position="90"/>
    </location>
    <ligand>
        <name>Zn(2+)</name>
        <dbReference type="ChEBI" id="CHEBI:29105"/>
        <note>catalytic</note>
    </ligand>
</feature>
<organism>
    <name type="scientific">Salmonella typhimurium (strain LT2 / SGSC1412 / ATCC 700720)</name>
    <dbReference type="NCBI Taxonomy" id="99287"/>
    <lineage>
        <taxon>Bacteria</taxon>
        <taxon>Pseudomonadati</taxon>
        <taxon>Pseudomonadota</taxon>
        <taxon>Gammaproteobacteria</taxon>
        <taxon>Enterobacterales</taxon>
        <taxon>Enterobacteriaceae</taxon>
        <taxon>Salmonella</taxon>
    </lineage>
</organism>
<name>TADA_SALTY</name>
<reference key="1">
    <citation type="journal article" date="2001" name="Nature">
        <title>Complete genome sequence of Salmonella enterica serovar Typhimurium LT2.</title>
        <authorList>
            <person name="McClelland M."/>
            <person name="Sanderson K.E."/>
            <person name="Spieth J."/>
            <person name="Clifton S.W."/>
            <person name="Latreille P."/>
            <person name="Courtney L."/>
            <person name="Porwollik S."/>
            <person name="Ali J."/>
            <person name="Dante M."/>
            <person name="Du F."/>
            <person name="Hou S."/>
            <person name="Layman D."/>
            <person name="Leonard S."/>
            <person name="Nguyen C."/>
            <person name="Scott K."/>
            <person name="Holmes A."/>
            <person name="Grewal N."/>
            <person name="Mulvaney E."/>
            <person name="Ryan E."/>
            <person name="Sun H."/>
            <person name="Florea L."/>
            <person name="Miller W."/>
            <person name="Stoneking T."/>
            <person name="Nhan M."/>
            <person name="Waterston R."/>
            <person name="Wilson R.K."/>
        </authorList>
    </citation>
    <scope>NUCLEOTIDE SEQUENCE [LARGE SCALE GENOMIC DNA]</scope>
    <source>
        <strain>LT2 / SGSC1412 / ATCC 700720</strain>
    </source>
</reference>
<protein>
    <recommendedName>
        <fullName evidence="1">tRNA-specific adenosine deaminase</fullName>
        <ecNumber evidence="1">3.5.4.33</ecNumber>
    </recommendedName>
</protein>
<gene>
    <name evidence="1" type="primary">tadA</name>
    <name type="ordered locus">STM2568</name>
</gene>
<sequence length="172" mass="19204">MSDVELDHEYWMRHALTLAKRAWDEREVPVGAVLVHNHRVIGEGWNRPIGRHDPTAHAEIMALRQGGLVLQNYRLLDTTLYVTLEPCVMCAGAMVHSRIGRVVFGARDAKTGAAGSLIDVLHHPGMNHRVEIIEGVLRDECATLLSDFFRMRRQEIKALKKADRAEGAGPAV</sequence>
<dbReference type="EC" id="3.5.4.33" evidence="1"/>
<dbReference type="EMBL" id="AE006468">
    <property type="protein sequence ID" value="AAL21462.1"/>
    <property type="status" value="ALT_INIT"/>
    <property type="molecule type" value="Genomic_DNA"/>
</dbReference>
<dbReference type="SMR" id="Q7CQ08"/>
<dbReference type="STRING" id="99287.STM2568"/>
<dbReference type="PaxDb" id="99287-STM2568"/>
<dbReference type="KEGG" id="stm:STM2568"/>
<dbReference type="PATRIC" id="fig|99287.12.peg.2709"/>
<dbReference type="HOGENOM" id="CLU_025810_3_0_6"/>
<dbReference type="PhylomeDB" id="Q7CQ08"/>
<dbReference type="Proteomes" id="UP000001014">
    <property type="component" value="Chromosome"/>
</dbReference>
<dbReference type="GO" id="GO:0052717">
    <property type="term" value="F:tRNA-specific adenosine-34 deaminase activity"/>
    <property type="evidence" value="ECO:0000318"/>
    <property type="project" value="GO_Central"/>
</dbReference>
<dbReference type="GO" id="GO:0008270">
    <property type="term" value="F:zinc ion binding"/>
    <property type="evidence" value="ECO:0007669"/>
    <property type="project" value="UniProtKB-UniRule"/>
</dbReference>
<dbReference type="GO" id="GO:0002100">
    <property type="term" value="P:tRNA wobble adenosine to inosine editing"/>
    <property type="evidence" value="ECO:0000318"/>
    <property type="project" value="GO_Central"/>
</dbReference>
<dbReference type="CDD" id="cd01285">
    <property type="entry name" value="nucleoside_deaminase"/>
    <property type="match status" value="1"/>
</dbReference>
<dbReference type="FunFam" id="3.40.140.10:FF:000005">
    <property type="entry name" value="tRNA-specific adenosine deaminase"/>
    <property type="match status" value="1"/>
</dbReference>
<dbReference type="Gene3D" id="3.40.140.10">
    <property type="entry name" value="Cytidine Deaminase, domain 2"/>
    <property type="match status" value="1"/>
</dbReference>
<dbReference type="HAMAP" id="MF_00972">
    <property type="entry name" value="tRNA_aden_deaminase"/>
    <property type="match status" value="1"/>
</dbReference>
<dbReference type="InterPro" id="IPR016192">
    <property type="entry name" value="APOBEC/CMP_deaminase_Zn-bd"/>
</dbReference>
<dbReference type="InterPro" id="IPR002125">
    <property type="entry name" value="CMP_dCMP_dom"/>
</dbReference>
<dbReference type="InterPro" id="IPR016193">
    <property type="entry name" value="Cytidine_deaminase-like"/>
</dbReference>
<dbReference type="InterPro" id="IPR028883">
    <property type="entry name" value="tRNA_aden_deaminase"/>
</dbReference>
<dbReference type="NCBIfam" id="NF008113">
    <property type="entry name" value="PRK10860.1"/>
    <property type="match status" value="1"/>
</dbReference>
<dbReference type="PANTHER" id="PTHR11079">
    <property type="entry name" value="CYTOSINE DEAMINASE FAMILY MEMBER"/>
    <property type="match status" value="1"/>
</dbReference>
<dbReference type="PANTHER" id="PTHR11079:SF202">
    <property type="entry name" value="TRNA-SPECIFIC ADENOSINE DEAMINASE"/>
    <property type="match status" value="1"/>
</dbReference>
<dbReference type="Pfam" id="PF14437">
    <property type="entry name" value="MafB19-deam"/>
    <property type="match status" value="1"/>
</dbReference>
<dbReference type="SUPFAM" id="SSF53927">
    <property type="entry name" value="Cytidine deaminase-like"/>
    <property type="match status" value="1"/>
</dbReference>
<dbReference type="PROSITE" id="PS00903">
    <property type="entry name" value="CYT_DCMP_DEAMINASES_1"/>
    <property type="match status" value="1"/>
</dbReference>
<dbReference type="PROSITE" id="PS51747">
    <property type="entry name" value="CYT_DCMP_DEAMINASES_2"/>
    <property type="match status" value="1"/>
</dbReference>
<keyword id="KW-0378">Hydrolase</keyword>
<keyword id="KW-0479">Metal-binding</keyword>
<keyword id="KW-1185">Reference proteome</keyword>
<keyword id="KW-0819">tRNA processing</keyword>
<keyword id="KW-0862">Zinc</keyword>